<name>PB2_I72A4</name>
<keyword id="KW-1157">Cap snatching</keyword>
<keyword id="KW-1262">Eukaryotic host gene expression shutoff by virus</keyword>
<keyword id="KW-1191">Eukaryotic host transcription shutoff by virus</keyword>
<keyword id="KW-1190">Host gene expression shutoff by virus</keyword>
<keyword id="KW-1045">Host mitochondrion</keyword>
<keyword id="KW-1048">Host nucleus</keyword>
<keyword id="KW-0945">Host-virus interaction</keyword>
<keyword id="KW-1090">Inhibition of host innate immune response by virus</keyword>
<keyword id="KW-1097">Inhibition of host MAVS by virus</keyword>
<keyword id="KW-1113">Inhibition of host RLR pathway by virus</keyword>
<keyword id="KW-1104">Inhibition of host RNA polymerase II by virus</keyword>
<keyword id="KW-0506">mRNA capping</keyword>
<keyword id="KW-0507">mRNA processing</keyword>
<keyword id="KW-0899">Viral immunoevasion</keyword>
<keyword id="KW-1195">Viral transcription</keyword>
<keyword id="KW-0946">Virion</keyword>
<organism>
    <name type="scientific">Influenza A virus (strain A/Memphis/101/1972 H3N2)</name>
    <dbReference type="NCBI Taxonomy" id="383583"/>
    <lineage>
        <taxon>Viruses</taxon>
        <taxon>Riboviria</taxon>
        <taxon>Orthornavirae</taxon>
        <taxon>Negarnaviricota</taxon>
        <taxon>Polyploviricotina</taxon>
        <taxon>Insthoviricetes</taxon>
        <taxon>Articulavirales</taxon>
        <taxon>Orthomyxoviridae</taxon>
        <taxon>Alphainfluenzavirus</taxon>
        <taxon>Alphainfluenzavirus influenzae</taxon>
        <taxon>Influenza A virus</taxon>
    </lineage>
</organism>
<sequence length="759" mass="86071">MERIKELRNLMSQSRTREILTKTTVDHMAIIKKYTSGRQEKNPSLRMKWMMAMKYPITADKRITEMVPERNEQGQTLWSKMSDAGSDRVMVSPLAVTWWNRNGPVTSTVHYPKVYKTYFDKVERLKHGTFGPVHFRNQVKIRRRVDINPGHADLSAKEAQDVIMEVVFPNEVGARILTSESQLTITKEKKEELQDCKISPLMVAYMLERELVRKTRFLPVAGGTSSVYIEVLHLTQGTCWEQMYTPGGEVRNDDVDQSLIIAARNIVRRAAVSADPLASLLEMCHSTLIGGTRMVDILRQNPTEEQAVDICKAAMGLRISSSFSFGGFTFKRTSGSSIKREEEVLTGNLQTLKIRVHEGYEEFTMVGKRATAILRKATRRLVQLIVSGRDEQSIAEAIIVAMVFSQEDCMIKAVRGDLNFVNRANQRLNPMHQLLRHFQKDAKVLFQNWGIEHIDNVMGMVGVLPDMTPSTEMSMRGIRVSKMGVDEYSSTERVVVSIDRFLRVRDQRGNVLLSPEEVSETQGTERLTITYSSSMMWEINGPESVLVNTYQWIIRNWETVKIQWSQNPTMLYNKMEFEPFQSLVPKAIRGQYSGFVRTLFQQMRDVLGTFDTTQIIKLLPFAAAPPKQSRMQFSSLTVNVRGSGMRILVRGNSPVFNYNKTTKRLTILGKDAGTLIEDPDESTSGVESAVLRGFLILGKEDRRYGPALSINELSNLAKGEKANVLIGQGDVVLVMKRKRDSSILTDSQTATKRIRMAIN</sequence>
<proteinExistence type="inferred from homology"/>
<feature type="chain" id="PRO_0000279642" description="Polymerase basic protein 2">
    <location>
        <begin position="1"/>
        <end position="759"/>
    </location>
</feature>
<feature type="short sequence motif" description="Nuclear localization signal" evidence="1">
    <location>
        <begin position="736"/>
        <end position="739"/>
    </location>
</feature>
<feature type="site" description="Mammalian adaptation" evidence="1">
    <location>
        <position position="627"/>
    </location>
</feature>
<reference key="1">
    <citation type="submission" date="2006-02" db="EMBL/GenBank/DDBJ databases">
        <title>The NIAID influenza genome sequencing project.</title>
        <authorList>
            <person name="Ghedin E."/>
            <person name="Spiro D."/>
            <person name="Miller N."/>
            <person name="Zaborsky J."/>
            <person name="Feldblyum T."/>
            <person name="Subbu V."/>
            <person name="Shumway M."/>
            <person name="Sparenborg J."/>
            <person name="Groveman L."/>
            <person name="Halpin R."/>
            <person name="Sitz J."/>
            <person name="Koo H."/>
            <person name="Salzberg S.L."/>
            <person name="Webster R.G."/>
            <person name="Hoffmann E."/>
            <person name="Krauss S."/>
            <person name="Naeve C."/>
            <person name="Bao Y."/>
            <person name="Bolotov P."/>
            <person name="Dernovoy D."/>
            <person name="Kiryutin B."/>
            <person name="Lipman D.J."/>
            <person name="Tatusova T."/>
        </authorList>
    </citation>
    <scope>NUCLEOTIDE SEQUENCE [GENOMIC RNA]</scope>
</reference>
<organismHost>
    <name type="scientific">Aves</name>
    <dbReference type="NCBI Taxonomy" id="8782"/>
</organismHost>
<organismHost>
    <name type="scientific">Cetacea</name>
    <name type="common">whales</name>
    <dbReference type="NCBI Taxonomy" id="9721"/>
</organismHost>
<organismHost>
    <name type="scientific">Homo sapiens</name>
    <name type="common">Human</name>
    <dbReference type="NCBI Taxonomy" id="9606"/>
</organismHost>
<organismHost>
    <name type="scientific">Phocidae</name>
    <name type="common">true seals</name>
    <dbReference type="NCBI Taxonomy" id="9709"/>
</organismHost>
<organismHost>
    <name type="scientific">Sus scrofa</name>
    <name type="common">Pig</name>
    <dbReference type="NCBI Taxonomy" id="9823"/>
</organismHost>
<gene>
    <name evidence="1" type="primary">PB2</name>
</gene>
<comment type="function">
    <text evidence="1">Plays an essential role in transcription initiation and cap-stealing mechanism, in which cellular capped pre-mRNAs are used to generate primers for viral transcription. Recognizes and binds the 7-methylguanosine-containing cap of the target pre-RNA which is subsequently cleaved after 10-13 nucleotides by the viral protein PA. Plays a role in the initiation of the viral genome replication and modulates the activity of the ribonucleoprotein (RNP) complex. In addition, participates in the inhibition of type I interferon induction through interaction with and inhibition of the host mitochondrial antiviral signaling protein MAVS.</text>
</comment>
<comment type="subunit">
    <text evidence="1">Influenza RNA polymerase is composed of three subunits: PB1, PB2 and PA. Interacts (via N-terminus) with PB1 (via C-terminus). Interacts with nucleoprotein NP (via N-terminus). Interacts (via N-terminus) with host MAVS (via N-terminus); this interaction inhibits host innate immune response.</text>
</comment>
<comment type="subcellular location">
    <subcellularLocation>
        <location evidence="1">Virion</location>
    </subcellularLocation>
    <subcellularLocation>
        <location evidence="1">Host nucleus</location>
    </subcellularLocation>
    <subcellularLocation>
        <location evidence="1">Host mitochondrion</location>
    </subcellularLocation>
</comment>
<comment type="similarity">
    <text evidence="1">Belongs to the influenza viruses PB2 family.</text>
</comment>
<protein>
    <recommendedName>
        <fullName evidence="1">Polymerase basic protein 2</fullName>
    </recommendedName>
    <alternativeName>
        <fullName evidence="1">RNA-directed RNA polymerase subunit P3</fullName>
    </alternativeName>
</protein>
<dbReference type="EMBL" id="CY008683">
    <property type="protein sequence ID" value="ABD17333.1"/>
    <property type="molecule type" value="Genomic_RNA"/>
</dbReference>
<dbReference type="SMR" id="Q2ICQ0"/>
<dbReference type="PRO" id="PR:Q2ICQ0"/>
<dbReference type="Proteomes" id="UP000009189">
    <property type="component" value="Genome"/>
</dbReference>
<dbReference type="GO" id="GO:0033650">
    <property type="term" value="C:host cell mitochondrion"/>
    <property type="evidence" value="ECO:0007669"/>
    <property type="project" value="UniProtKB-SubCell"/>
</dbReference>
<dbReference type="GO" id="GO:0042025">
    <property type="term" value="C:host cell nucleus"/>
    <property type="evidence" value="ECO:0007669"/>
    <property type="project" value="UniProtKB-SubCell"/>
</dbReference>
<dbReference type="GO" id="GO:0044423">
    <property type="term" value="C:virion component"/>
    <property type="evidence" value="ECO:0007669"/>
    <property type="project" value="UniProtKB-UniRule"/>
</dbReference>
<dbReference type="GO" id="GO:0003723">
    <property type="term" value="F:RNA binding"/>
    <property type="evidence" value="ECO:0007669"/>
    <property type="project" value="UniProtKB-UniRule"/>
</dbReference>
<dbReference type="GO" id="GO:0003968">
    <property type="term" value="F:RNA-directed RNA polymerase activity"/>
    <property type="evidence" value="ECO:0007669"/>
    <property type="project" value="UniProtKB-UniRule"/>
</dbReference>
<dbReference type="GO" id="GO:0006370">
    <property type="term" value="P:7-methylguanosine mRNA capping"/>
    <property type="evidence" value="ECO:0007669"/>
    <property type="project" value="UniProtKB-UniRule"/>
</dbReference>
<dbReference type="GO" id="GO:0075526">
    <property type="term" value="P:cap snatching"/>
    <property type="evidence" value="ECO:0007669"/>
    <property type="project" value="UniProtKB-UniRule"/>
</dbReference>
<dbReference type="GO" id="GO:0006351">
    <property type="term" value="P:DNA-templated transcription"/>
    <property type="evidence" value="ECO:0007669"/>
    <property type="project" value="UniProtKB-UniRule"/>
</dbReference>
<dbReference type="GO" id="GO:0039545">
    <property type="term" value="P:symbiont-mediated suppression of host cytoplasmic pattern recognition receptor signaling pathway via inhibition of MAVS activity"/>
    <property type="evidence" value="ECO:0007669"/>
    <property type="project" value="UniProtKB-UniRule"/>
</dbReference>
<dbReference type="GO" id="GO:0039657">
    <property type="term" value="P:symbiont-mediated suppression of host gene expression"/>
    <property type="evidence" value="ECO:0007669"/>
    <property type="project" value="UniProtKB-KW"/>
</dbReference>
<dbReference type="GO" id="GO:0039523">
    <property type="term" value="P:symbiont-mediated suppression of host mRNA transcription via inhibition of RNA polymerase II activity"/>
    <property type="evidence" value="ECO:0007669"/>
    <property type="project" value="UniProtKB-UniRule"/>
</dbReference>
<dbReference type="GO" id="GO:0039694">
    <property type="term" value="P:viral RNA genome replication"/>
    <property type="evidence" value="ECO:0007669"/>
    <property type="project" value="InterPro"/>
</dbReference>
<dbReference type="FunFam" id="3.30.30.90:FF:000001">
    <property type="entry name" value="Polymerase basic protein 2"/>
    <property type="match status" value="1"/>
</dbReference>
<dbReference type="Gene3D" id="3.30.30.90">
    <property type="entry name" value="Polymerase Basic Protein 2, C-terminal domain"/>
    <property type="match status" value="1"/>
</dbReference>
<dbReference type="HAMAP" id="MF_04062">
    <property type="entry name" value="INV_PB2"/>
    <property type="match status" value="1"/>
</dbReference>
<dbReference type="InterPro" id="IPR049110">
    <property type="entry name" value="Flu_PB2_2nd"/>
</dbReference>
<dbReference type="InterPro" id="IPR049114">
    <property type="entry name" value="Flu_PB2_6th"/>
</dbReference>
<dbReference type="InterPro" id="IPR049115">
    <property type="entry name" value="Flu_PB2_C"/>
</dbReference>
<dbReference type="InterPro" id="IPR048298">
    <property type="entry name" value="Flu_PB2_CAP-bd"/>
</dbReference>
<dbReference type="InterPro" id="IPR049111">
    <property type="entry name" value="Flu_PB2_middle"/>
</dbReference>
<dbReference type="InterPro" id="IPR049106">
    <property type="entry name" value="Flu_PB2_N"/>
</dbReference>
<dbReference type="InterPro" id="IPR001591">
    <property type="entry name" value="INV_PB2"/>
</dbReference>
<dbReference type="InterPro" id="IPR049113">
    <property type="entry name" value="PB2_helical"/>
</dbReference>
<dbReference type="InterPro" id="IPR037258">
    <property type="entry name" value="PDB2_C"/>
</dbReference>
<dbReference type="Pfam" id="PF20947">
    <property type="entry name" value="Flu_PB2_1st"/>
    <property type="match status" value="1"/>
</dbReference>
<dbReference type="Pfam" id="PF20948">
    <property type="entry name" value="Flu_PB2_2nd"/>
    <property type="match status" value="1"/>
</dbReference>
<dbReference type="Pfam" id="PF20949">
    <property type="entry name" value="Flu_PB2_3rd"/>
    <property type="match status" value="1"/>
</dbReference>
<dbReference type="Pfam" id="PF20950">
    <property type="entry name" value="Flu_PB2_4th"/>
    <property type="match status" value="1"/>
</dbReference>
<dbReference type="Pfam" id="PF00604">
    <property type="entry name" value="Flu_PB2_5th"/>
    <property type="match status" value="1"/>
</dbReference>
<dbReference type="Pfam" id="PF20951">
    <property type="entry name" value="Flu_PB2_6th"/>
    <property type="match status" value="1"/>
</dbReference>
<dbReference type="Pfam" id="PF20952">
    <property type="entry name" value="Flu_PB2_7th"/>
    <property type="match status" value="1"/>
</dbReference>
<dbReference type="SUPFAM" id="SSF160453">
    <property type="entry name" value="PB2 C-terminal domain-like"/>
    <property type="match status" value="1"/>
</dbReference>
<evidence type="ECO:0000255" key="1">
    <source>
        <dbReference type="HAMAP-Rule" id="MF_04062"/>
    </source>
</evidence>
<accession>Q2ICQ0</accession>